<protein>
    <recommendedName>
        <fullName>Exonuclease subunit 2</fullName>
        <ecNumber>3.1.11.-</ecNumber>
    </recommendedName>
    <alternativeName>
        <fullName>Protein Gp46</fullName>
    </alternativeName>
</protein>
<organism>
    <name type="scientific">Escherichia phage RB69</name>
    <name type="common">Bacteriophage RB69</name>
    <dbReference type="NCBI Taxonomy" id="12353"/>
    <lineage>
        <taxon>Viruses</taxon>
        <taxon>Duplodnaviria</taxon>
        <taxon>Heunggongvirae</taxon>
        <taxon>Uroviricota</taxon>
        <taxon>Caudoviricetes</taxon>
        <taxon>Straboviridae</taxon>
        <taxon>Tevenvirinae</taxon>
        <taxon>Mosigvirus</taxon>
        <taxon>Mosigvirus RB69</taxon>
    </lineage>
</organism>
<accession>O64299</accession>
<accession>Q7Y579</accession>
<sequence>MKSFKLNRVRYQNIMSVGGNPIDIQLDKVQKTLITGKNGGGKSTMLEAITFGLFGKPFRDVKKGQIINSTNKKELLVELWMEFDDKKYFIKRGQKPNIFEISVDGVRLDESASSRDFQEEFERSIGMSYASFKQIVVLGTAGYTPFMALSTPARRKLVEDLLEVGTLAEMDKINKSQVRELNSQGQVLDAKKDGVIQQIKIYNENIERQKKLSGDNVARLQNMYDDLAKEARSLKAEIEEANERLLNIVLDEDPTEAFNKIGQEAFLIKSKIDSYNKVIKMYHDGGTCPTCASQLHQGDPIVSKITDKLHECNHSFEQLTCHRDNLSVLVDEYRANVKTKQDLASDIRTKKQAMIATIDKAKKVKAAIEQASAEFIDHADEIALLQKELDKIIKTKSDIVLEKYHRGIITDMLKDSGIKGAIIKKYVPLFNKQINHYLKIMEADYVFSIDEEFNESIKSRGREEFSYASFSQGEKARIDIALLFTWRDIAEKVSGVRINTLIMDEVMDSATDSEGIKAISTILNSLTDANVFIISHRDHDPQAYGQHLQMSKVGRFTVMTVS</sequence>
<comment type="function">
    <text>Exonuclease involved in phage DNA recombination, replication, and repair.</text>
</comment>
<comment type="subunit">
    <text>Consists of two subunits: Gp47 and Gp46.</text>
</comment>
<comment type="similarity">
    <text evidence="2">To phage T5 protein D13 and to yeast RAD52.</text>
</comment>
<feature type="chain" id="PRO_0000164938" description="Exonuclease subunit 2">
    <location>
        <begin position="1"/>
        <end position="562"/>
    </location>
</feature>
<feature type="binding site" evidence="1">
    <location>
        <begin position="36"/>
        <end position="43"/>
    </location>
    <ligand>
        <name>ATP</name>
        <dbReference type="ChEBI" id="CHEBI:30616"/>
    </ligand>
</feature>
<evidence type="ECO:0000255" key="1"/>
<evidence type="ECO:0000305" key="2"/>
<keyword id="KW-0067">ATP-binding</keyword>
<keyword id="KW-0227">DNA damage</keyword>
<keyword id="KW-0234">DNA repair</keyword>
<keyword id="KW-0269">Exonuclease</keyword>
<keyword id="KW-0378">Hydrolase</keyword>
<keyword id="KW-0540">Nuclease</keyword>
<keyword id="KW-0547">Nucleotide-binding</keyword>
<keyword id="KW-1185">Reference proteome</keyword>
<reference key="1">
    <citation type="submission" date="2003-05" db="EMBL/GenBank/DDBJ databases">
        <title>Enterobacteria phage RB69 complete genome.</title>
        <authorList>
            <person name="Petrov V."/>
            <person name="Nolan J."/>
            <person name="Chin D."/>
            <person name="Letarov A."/>
            <person name="Krisch H.M."/>
            <person name="Karam J.D."/>
        </authorList>
    </citation>
    <scope>NUCLEOTIDE SEQUENCE [LARGE SCALE GENOMIC DNA]</scope>
</reference>
<reference key="2">
    <citation type="journal article" date="1998" name="J. Bacteriol.">
        <title>Divergence of a DNA replication gene cluster in the T4-related bacteriophage RB69.</title>
        <authorList>
            <person name="Yeh L.-S."/>
            <person name="Hsu T."/>
            <person name="Karam J.D."/>
        </authorList>
    </citation>
    <scope>NUCLEOTIDE SEQUENCE [GENOMIC DNA] OF 5-562</scope>
</reference>
<proteinExistence type="predicted"/>
<organismHost>
    <name type="scientific">Escherichia coli</name>
    <dbReference type="NCBI Taxonomy" id="562"/>
</organismHost>
<gene>
    <name type="primary">46</name>
</gene>
<dbReference type="EC" id="3.1.11.-"/>
<dbReference type="EMBL" id="AY303349">
    <property type="protein sequence ID" value="AAP75965.1"/>
    <property type="molecule type" value="Genomic_DNA"/>
</dbReference>
<dbReference type="EMBL" id="AF039565">
    <property type="protein sequence ID" value="AAC39308.1"/>
    <property type="molecule type" value="Genomic_DNA"/>
</dbReference>
<dbReference type="RefSeq" id="NP_861753.1">
    <property type="nucleotide sequence ID" value="NC_004928.1"/>
</dbReference>
<dbReference type="GeneID" id="1494179"/>
<dbReference type="KEGG" id="vg:1494179"/>
<dbReference type="OrthoDB" id="6017at10239"/>
<dbReference type="Proteomes" id="UP000000876">
    <property type="component" value="Genome"/>
</dbReference>
<dbReference type="GO" id="GO:0005524">
    <property type="term" value="F:ATP binding"/>
    <property type="evidence" value="ECO:0007669"/>
    <property type="project" value="UniProtKB-KW"/>
</dbReference>
<dbReference type="GO" id="GO:0016887">
    <property type="term" value="F:ATP hydrolysis activity"/>
    <property type="evidence" value="ECO:0007669"/>
    <property type="project" value="InterPro"/>
</dbReference>
<dbReference type="GO" id="GO:0004527">
    <property type="term" value="F:exonuclease activity"/>
    <property type="evidence" value="ECO:0007669"/>
    <property type="project" value="UniProtKB-KW"/>
</dbReference>
<dbReference type="GO" id="GO:0006302">
    <property type="term" value="P:double-strand break repair"/>
    <property type="evidence" value="ECO:0007669"/>
    <property type="project" value="InterPro"/>
</dbReference>
<dbReference type="CDD" id="cd00267">
    <property type="entry name" value="ABC_ATPase"/>
    <property type="match status" value="1"/>
</dbReference>
<dbReference type="Gene3D" id="3.40.50.300">
    <property type="entry name" value="P-loop containing nucleotide triphosphate hydrolases"/>
    <property type="match status" value="2"/>
</dbReference>
<dbReference type="InterPro" id="IPR027417">
    <property type="entry name" value="P-loop_NTPase"/>
</dbReference>
<dbReference type="InterPro" id="IPR038729">
    <property type="entry name" value="Rad50/SbcC_AAA"/>
</dbReference>
<dbReference type="PANTHER" id="PTHR32114">
    <property type="entry name" value="ABC TRANSPORTER ABCH.3"/>
    <property type="match status" value="1"/>
</dbReference>
<dbReference type="PANTHER" id="PTHR32114:SF2">
    <property type="entry name" value="ABC TRANSPORTER ABCH.3"/>
    <property type="match status" value="1"/>
</dbReference>
<dbReference type="Pfam" id="PF13476">
    <property type="entry name" value="AAA_23"/>
    <property type="match status" value="1"/>
</dbReference>
<dbReference type="SUPFAM" id="SSF52540">
    <property type="entry name" value="P-loop containing nucleoside triphosphate hydrolases"/>
    <property type="match status" value="1"/>
</dbReference>
<name>EXO2_BPR69</name>